<organism>
    <name type="scientific">Mus musculus</name>
    <name type="common">Mouse</name>
    <dbReference type="NCBI Taxonomy" id="10090"/>
    <lineage>
        <taxon>Eukaryota</taxon>
        <taxon>Metazoa</taxon>
        <taxon>Chordata</taxon>
        <taxon>Craniata</taxon>
        <taxon>Vertebrata</taxon>
        <taxon>Euteleostomi</taxon>
        <taxon>Mammalia</taxon>
        <taxon>Eutheria</taxon>
        <taxon>Euarchontoglires</taxon>
        <taxon>Glires</taxon>
        <taxon>Rodentia</taxon>
        <taxon>Myomorpha</taxon>
        <taxon>Muroidea</taxon>
        <taxon>Muridae</taxon>
        <taxon>Murinae</taxon>
        <taxon>Mus</taxon>
        <taxon>Mus</taxon>
    </lineage>
</organism>
<sequence length="891" mass="95984">MLPVEVPLSHLGPPILLLLQLLLPPTSAFFPNIWSLLAAPGSVTHQDLTEEAALNVTLVLFLEQPHPGRPRLHVEDYRGRTLLADDIFAAYFGPGFSSRRFRAALGEVSRANAAQDFLPAFKSNPDLHFDAERLVQGRTRLVGALRETLVAARALEYTLARQRLGAALHALQDFYSHSNWVELGERQPHPHLLWPRQELWSLAQVGDPTCSDCEGLSCPGNMLDSTLLTSGYFGMHPPKPPGKCSHGGHFDQSSSQPPRGGINKDSTSPSFSPHHKLHLQAAEVALLASIEAFSLLRSRLGDKAFSRLLDITPASSLSFVLDTTGSMGEEINAAKIQARRIVEQRQGSPMEPVFYILVPFHDPGFGPVFTTSDPDSFWQKLNEIHALGGGDEPEMCLSALELALLHTPPLSDIFVFTDASPKDALLTNRVESLTRERRCRVTFLVTEDPSRTGGRRRREALSPLRFEPYEAIARASGGEVIFTKDQYIQDVAAIVGESMAGLVTLPLDPPVFTPGEPCVFSVDSLLWQVTVRMHGDISSFWIKSPAGVSQGPEEGIGPLGHTRRFGQFWTVTMTDPPRTGTWEIQVAAAGTPRVRVQAQTSLDFLFHFGISVEDGPHPGLYPLTQPVAGLQTQLLVEVTGLTSRQKLVGGQPQFSHVVLRRVPEGTQLGRVSLEPVGPPVRGLLAASLPPTLLSVSSPFSLELVGQGGGGESLRRTAPQPCSVAPVLLELSGPPDFLTPGSKAPLSLHIVSFSGPQDLDLRTSVNPSFSLTSNLSRARLGLNESAWGRLWLEVPDSAAPDSVVMVTVTAAGQGASQVPPTHAFLRLLVLAQSSKDQLDGPAHSAAPVLPPVSPALLPSTLVTQGRAGGGMAGKAWWGTVGGVLFLLGCTSW</sequence>
<keyword id="KW-0325">Glycoprotein</keyword>
<keyword id="KW-1185">Reference proteome</keyword>
<keyword id="KW-0964">Secreted</keyword>
<keyword id="KW-0732">Signal</keyword>
<gene>
    <name type="primary">Vwa7</name>
    <name type="synonym">D17h6s56e-3</name>
    <name type="synonym">G7c</name>
</gene>
<protein>
    <recommendedName>
        <fullName>von Willebrand factor A domain-containing protein 7</fullName>
    </recommendedName>
    <alternativeName>
        <fullName>Protein G7c</fullName>
    </alternativeName>
</protein>
<proteinExistence type="evidence at transcript level"/>
<dbReference type="EMBL" id="AF134319">
    <property type="protein sequence ID" value="AAF61401.1"/>
    <property type="molecule type" value="mRNA"/>
</dbReference>
<dbReference type="EMBL" id="AF134318">
    <property type="protein sequence ID" value="AAF69177.1"/>
    <property type="molecule type" value="Genomic_DNA"/>
</dbReference>
<dbReference type="EMBL" id="AF397035">
    <property type="protein sequence ID" value="AAL14453.1"/>
    <property type="molecule type" value="Genomic_DNA"/>
</dbReference>
<dbReference type="EMBL" id="AF397036">
    <property type="protein sequence ID" value="AAL14461.1"/>
    <property type="molecule type" value="Genomic_DNA"/>
</dbReference>
<dbReference type="EMBL" id="AF109905">
    <property type="protein sequence ID" value="AAC84152.1"/>
    <property type="status" value="ALT_SEQ"/>
    <property type="molecule type" value="Genomic_DNA"/>
</dbReference>
<dbReference type="CCDS" id="CCDS28672.1"/>
<dbReference type="RefSeq" id="NP_613048.1">
    <property type="nucleotide sequence ID" value="NM_138582.1"/>
</dbReference>
<dbReference type="RefSeq" id="XP_017172986.1">
    <property type="nucleotide sequence ID" value="XM_017317497.3"/>
</dbReference>
<dbReference type="SMR" id="Q9JHA8"/>
<dbReference type="FunCoup" id="Q9JHA8">
    <property type="interactions" value="8"/>
</dbReference>
<dbReference type="STRING" id="10090.ENSMUSP00000007245"/>
<dbReference type="GlyCosmos" id="Q9JHA8">
    <property type="glycosylation" value="1 site, No reported glycans"/>
</dbReference>
<dbReference type="GlyGen" id="Q9JHA8">
    <property type="glycosylation" value="3 sites, 2 N-linked glycans (2 sites)"/>
</dbReference>
<dbReference type="iPTMnet" id="Q9JHA8"/>
<dbReference type="PhosphoSitePlus" id="Q9JHA8"/>
<dbReference type="PaxDb" id="10090-ENSMUSP00000007245"/>
<dbReference type="ProteomicsDB" id="299959"/>
<dbReference type="Antibodypedia" id="56596">
    <property type="antibodies" value="15 antibodies from 5 providers"/>
</dbReference>
<dbReference type="Ensembl" id="ENSMUST00000007245.8">
    <property type="protein sequence ID" value="ENSMUSP00000007245.2"/>
    <property type="gene ID" value="ENSMUSG00000007030.9"/>
</dbReference>
<dbReference type="GeneID" id="27762"/>
<dbReference type="KEGG" id="mmu:27762"/>
<dbReference type="UCSC" id="uc008cfa.1">
    <property type="organism name" value="mouse"/>
</dbReference>
<dbReference type="AGR" id="MGI:1306798"/>
<dbReference type="CTD" id="80737"/>
<dbReference type="MGI" id="MGI:1306798">
    <property type="gene designation" value="Vwa7"/>
</dbReference>
<dbReference type="VEuPathDB" id="HostDB:ENSMUSG00000007030"/>
<dbReference type="eggNOG" id="KOG4475">
    <property type="taxonomic scope" value="Eukaryota"/>
</dbReference>
<dbReference type="GeneTree" id="ENSGT00390000011517"/>
<dbReference type="HOGENOM" id="CLU_013884_0_0_1"/>
<dbReference type="InParanoid" id="Q9JHA8"/>
<dbReference type="OMA" id="MEPIHYV"/>
<dbReference type="OrthoDB" id="301415at2759"/>
<dbReference type="PhylomeDB" id="Q9JHA8"/>
<dbReference type="TreeFam" id="TF329905"/>
<dbReference type="BioGRID-ORCS" id="27762">
    <property type="hits" value="3 hits in 76 CRISPR screens"/>
</dbReference>
<dbReference type="PRO" id="PR:Q9JHA8"/>
<dbReference type="Proteomes" id="UP000000589">
    <property type="component" value="Chromosome 17"/>
</dbReference>
<dbReference type="RNAct" id="Q9JHA8">
    <property type="molecule type" value="protein"/>
</dbReference>
<dbReference type="Bgee" id="ENSMUSG00000007030">
    <property type="expression patterns" value="Expressed in lumbar dorsal root ganglion and 35 other cell types or tissues"/>
</dbReference>
<dbReference type="ExpressionAtlas" id="Q9JHA8">
    <property type="expression patterns" value="baseline and differential"/>
</dbReference>
<dbReference type="GO" id="GO:0005576">
    <property type="term" value="C:extracellular region"/>
    <property type="evidence" value="ECO:0007669"/>
    <property type="project" value="UniProtKB-SubCell"/>
</dbReference>
<dbReference type="Gene3D" id="3.40.50.410">
    <property type="entry name" value="von Willebrand factor, type A domain"/>
    <property type="match status" value="1"/>
</dbReference>
<dbReference type="InterPro" id="IPR056475">
    <property type="entry name" value="GBD_Hemicentin/VWA7"/>
</dbReference>
<dbReference type="InterPro" id="IPR056861">
    <property type="entry name" value="HMCN1-like_VWA"/>
</dbReference>
<dbReference type="InterPro" id="IPR052577">
    <property type="entry name" value="VWA7"/>
</dbReference>
<dbReference type="InterPro" id="IPR056862">
    <property type="entry name" value="VWA7_N"/>
</dbReference>
<dbReference type="InterPro" id="IPR036465">
    <property type="entry name" value="vWFA_dom_sf"/>
</dbReference>
<dbReference type="PANTHER" id="PTHR14905">
    <property type="entry name" value="NG37"/>
    <property type="match status" value="1"/>
</dbReference>
<dbReference type="PANTHER" id="PTHR14905:SF7">
    <property type="entry name" value="VON WILLEBRAND FACTOR A DOMAIN-CONTAINING PROTEIN 7"/>
    <property type="match status" value="1"/>
</dbReference>
<dbReference type="Pfam" id="PF23560">
    <property type="entry name" value="GBD_Hemicentin"/>
    <property type="match status" value="1"/>
</dbReference>
<dbReference type="Pfam" id="PF23619">
    <property type="entry name" value="Ig_VWA7"/>
    <property type="match status" value="1"/>
</dbReference>
<dbReference type="Pfam" id="PF23610">
    <property type="entry name" value="VWA7_4"/>
    <property type="match status" value="1"/>
</dbReference>
<dbReference type="Pfam" id="PF25107">
    <property type="entry name" value="VWA7_N"/>
    <property type="match status" value="1"/>
</dbReference>
<dbReference type="Pfam" id="PF25106">
    <property type="entry name" value="VWA_4"/>
    <property type="match status" value="1"/>
</dbReference>
<dbReference type="SUPFAM" id="SSF53300">
    <property type="entry name" value="vWA-like"/>
    <property type="match status" value="1"/>
</dbReference>
<feature type="signal peptide" evidence="1">
    <location>
        <begin position="1"/>
        <end position="28"/>
    </location>
</feature>
<feature type="chain" id="PRO_0000231632" description="von Willebrand factor A domain-containing protein 7">
    <location>
        <begin position="29"/>
        <end position="891"/>
    </location>
</feature>
<feature type="domain" description="VWFA">
    <location>
        <begin position="314"/>
        <end position="499"/>
    </location>
</feature>
<feature type="region of interest" description="Disordered" evidence="2">
    <location>
        <begin position="238"/>
        <end position="273"/>
    </location>
</feature>
<feature type="glycosylation site" description="N-linked (GlcNAc...) asparagine" evidence="1">
    <location>
        <position position="55"/>
    </location>
</feature>
<evidence type="ECO:0000255" key="1"/>
<evidence type="ECO:0000256" key="2">
    <source>
        <dbReference type="SAM" id="MobiDB-lite"/>
    </source>
</evidence>
<evidence type="ECO:0000269" key="3">
    <source>
    </source>
</evidence>
<evidence type="ECO:0000305" key="4"/>
<comment type="subcellular location">
    <subcellularLocation>
        <location evidence="4">Secreted</location>
    </subcellularLocation>
</comment>
<comment type="tissue specificity">
    <text evidence="3">Expressed at low level in many tissues.</text>
</comment>
<comment type="miscellaneous">
    <text>Recombinatorial hotspot within the class III region.</text>
</comment>
<comment type="sequence caution" evidence="4">
    <conflict type="erroneous gene model prediction">
        <sequence resource="EMBL-CDS" id="AAC84152"/>
    </conflict>
</comment>
<accession>Q9JHA8</accession>
<accession>Q9Z1Q8</accession>
<reference key="1">
    <citation type="journal article" date="2000" name="Immunogenetics">
        <title>G7c, a novel gene in the mouse and human major histocompatibility complex class III region, possibly controlling lung tumor susceptibility.</title>
        <authorList>
            <person name="Snoek M."/>
            <person name="Albertella M.R."/>
            <person name="van Kooij M."/>
            <person name="Wixon J."/>
            <person name="van Vugt H."/>
            <person name="de Groot K."/>
            <person name="Campbell R.D."/>
        </authorList>
    </citation>
    <scope>NUCLEOTIDE SEQUENCE [GENOMIC DNA / MRNA]</scope>
    <scope>TISSUE SPECIFICITY</scope>
    <source>
        <strain>BALB/cJ</strain>
        <tissue>Brain</tissue>
    </source>
</reference>
<reference key="2">
    <citation type="journal article" date="2001" name="Immunogenetics">
        <title>Genotype versus phenotype: conflicting results in mapping a lung tumor susceptibility locus to the G7c recombination interval in the mouse MHC class III region.</title>
        <authorList>
            <person name="van Kooij M."/>
            <person name="de Groot K."/>
            <person name="van Vugt H."/>
            <person name="Aten J."/>
            <person name="Snoek M."/>
        </authorList>
    </citation>
    <scope>NUCLEOTIDE SEQUENCE [GENOMIC DNA]</scope>
    <source>
        <strain>B10.A</strain>
    </source>
</reference>
<reference key="3">
    <citation type="journal article" date="2003" name="Genome Res.">
        <title>Analysis of the gene-dense major histocompatibility complex class III region and its comparison to mouse.</title>
        <authorList>
            <person name="Xie T."/>
            <person name="Rowen L."/>
            <person name="Aguado B."/>
            <person name="Ahearn M.E."/>
            <person name="Madan A."/>
            <person name="Qin S."/>
            <person name="Campbell R.D."/>
            <person name="Hood L."/>
        </authorList>
    </citation>
    <scope>NUCLEOTIDE SEQUENCE [LARGE SCALE GENOMIC DNA]</scope>
    <source>
        <strain>129</strain>
    </source>
</reference>
<name>VWA7_MOUSE</name>